<protein>
    <recommendedName>
        <fullName evidence="5">Chitin deacetylase 1</fullName>
        <ecNumber evidence="7">3.5.1.41</ecNumber>
    </recommendedName>
</protein>
<sequence length="301" mass="34642">MKIFNTIQSVLFAAFFLKQGNCLASNGSTALMGEVDMQTPFPEWLTEFTNLTQWPGIDPPYIPLDYINLTEVPELDRYYPGQCPKISREQCSFDCYNCIDVDDVTSCFKLSQTFDDGPAPATEALLKKLRQRTTFFVLGINTVNYPDIYEHILERGHLIGTHTWSHEFLPSLSNEEIVAQIEWSIWAMNATGKHFPKYFRPPYGAIDNRVRAIVKQFGLTVVLWDLDTFDWKLITNDDFRTEEEILMDINTWKGKRKGLILEHDGARRTVEVAIKINELIGSDQLTIAECIGDTDYIERYD</sequence>
<feature type="signal peptide" evidence="2">
    <location>
        <begin position="1"/>
        <end position="24"/>
    </location>
</feature>
<feature type="chain" id="PRO_0000024826" description="Chitin deacetylase 1">
    <location>
        <begin position="25"/>
        <end position="301"/>
    </location>
</feature>
<feature type="domain" description="NodB homology" evidence="3">
    <location>
        <begin position="108"/>
        <end position="288"/>
    </location>
</feature>
<feature type="active site" description="Proton acceptor" evidence="3">
    <location>
        <position position="115"/>
    </location>
</feature>
<feature type="active site" description="Proton donor" evidence="3">
    <location>
        <position position="263"/>
    </location>
</feature>
<feature type="binding site" evidence="1">
    <location>
        <position position="115"/>
    </location>
    <ligand>
        <name>acetate</name>
        <dbReference type="ChEBI" id="CHEBI:30089"/>
    </ligand>
</feature>
<feature type="binding site" evidence="1">
    <location>
        <position position="116"/>
    </location>
    <ligand>
        <name>Co(2+)</name>
        <dbReference type="ChEBI" id="CHEBI:48828"/>
    </ligand>
</feature>
<feature type="binding site" evidence="1">
    <location>
        <position position="162"/>
    </location>
    <ligand>
        <name>Co(2+)</name>
        <dbReference type="ChEBI" id="CHEBI:48828"/>
    </ligand>
</feature>
<feature type="binding site" evidence="1">
    <location>
        <position position="166"/>
    </location>
    <ligand>
        <name>Co(2+)</name>
        <dbReference type="ChEBI" id="CHEBI:48828"/>
    </ligand>
</feature>
<feature type="binding site" evidence="1">
    <location>
        <position position="203"/>
    </location>
    <ligand>
        <name>acetate</name>
        <dbReference type="ChEBI" id="CHEBI:30089"/>
    </ligand>
</feature>
<feature type="glycosylation site" description="N-linked (GlcNAc...) asparagine" evidence="2">
    <location>
        <position position="26"/>
    </location>
</feature>
<feature type="glycosylation site" description="N-linked (GlcNAc...) asparagine" evidence="2">
    <location>
        <position position="50"/>
    </location>
</feature>
<feature type="glycosylation site" description="N-linked (GlcNAc...) asparagine" evidence="2">
    <location>
        <position position="68"/>
    </location>
</feature>
<feature type="glycosylation site" description="N-linked (GlcNAc...) asparagine" evidence="2">
    <location>
        <position position="189"/>
    </location>
</feature>
<feature type="disulfide bond" evidence="1">
    <location>
        <begin position="107"/>
        <end position="290"/>
    </location>
</feature>
<name>CDA1_YEAST</name>
<evidence type="ECO:0000250" key="1">
    <source>
        <dbReference type="UniProtKB" id="Q6DWK3"/>
    </source>
</evidence>
<evidence type="ECO:0000255" key="2"/>
<evidence type="ECO:0000255" key="3">
    <source>
        <dbReference type="PROSITE-ProRule" id="PRU01014"/>
    </source>
</evidence>
<evidence type="ECO:0000269" key="4">
    <source>
    </source>
</evidence>
<evidence type="ECO:0000303" key="5">
    <source>
    </source>
</evidence>
<evidence type="ECO:0000305" key="6"/>
<evidence type="ECO:0000305" key="7">
    <source>
    </source>
</evidence>
<reference key="1">
    <citation type="journal article" date="1997" name="Nature">
        <title>The nucleotide sequence of Saccharomyces cerevisiae chromosome XII.</title>
        <authorList>
            <person name="Johnston M."/>
            <person name="Hillier L.W."/>
            <person name="Riles L."/>
            <person name="Albermann K."/>
            <person name="Andre B."/>
            <person name="Ansorge W."/>
            <person name="Benes V."/>
            <person name="Brueckner M."/>
            <person name="Delius H."/>
            <person name="Dubois E."/>
            <person name="Duesterhoeft A."/>
            <person name="Entian K.-D."/>
            <person name="Floeth M."/>
            <person name="Goffeau A."/>
            <person name="Hebling U."/>
            <person name="Heumann K."/>
            <person name="Heuss-Neitzel D."/>
            <person name="Hilbert H."/>
            <person name="Hilger F."/>
            <person name="Kleine K."/>
            <person name="Koetter P."/>
            <person name="Louis E.J."/>
            <person name="Messenguy F."/>
            <person name="Mewes H.-W."/>
            <person name="Miosga T."/>
            <person name="Moestl D."/>
            <person name="Mueller-Auer S."/>
            <person name="Nentwich U."/>
            <person name="Obermaier B."/>
            <person name="Piravandi E."/>
            <person name="Pohl T.M."/>
            <person name="Portetelle D."/>
            <person name="Purnelle B."/>
            <person name="Rechmann S."/>
            <person name="Rieger M."/>
            <person name="Rinke M."/>
            <person name="Rose M."/>
            <person name="Scharfe M."/>
            <person name="Scherens B."/>
            <person name="Scholler P."/>
            <person name="Schwager C."/>
            <person name="Schwarz S."/>
            <person name="Underwood A.P."/>
            <person name="Urrestarazu L.A."/>
            <person name="Vandenbol M."/>
            <person name="Verhasselt P."/>
            <person name="Vierendeels F."/>
            <person name="Voet M."/>
            <person name="Volckaert G."/>
            <person name="Voss H."/>
            <person name="Wambutt R."/>
            <person name="Wedler E."/>
            <person name="Wedler H."/>
            <person name="Zimmermann F.K."/>
            <person name="Zollner A."/>
            <person name="Hani J."/>
            <person name="Hoheisel J.D."/>
        </authorList>
    </citation>
    <scope>NUCLEOTIDE SEQUENCE [LARGE SCALE GENOMIC DNA]</scope>
    <source>
        <strain>ATCC 204508 / S288c</strain>
    </source>
</reference>
<reference key="2">
    <citation type="journal article" date="2014" name="G3 (Bethesda)">
        <title>The reference genome sequence of Saccharomyces cerevisiae: Then and now.</title>
        <authorList>
            <person name="Engel S.R."/>
            <person name="Dietrich F.S."/>
            <person name="Fisk D.G."/>
            <person name="Binkley G."/>
            <person name="Balakrishnan R."/>
            <person name="Costanzo M.C."/>
            <person name="Dwight S.S."/>
            <person name="Hitz B.C."/>
            <person name="Karra K."/>
            <person name="Nash R.S."/>
            <person name="Weng S."/>
            <person name="Wong E.D."/>
            <person name="Lloyd P."/>
            <person name="Skrzypek M.S."/>
            <person name="Miyasato S.R."/>
            <person name="Simison M."/>
            <person name="Cherry J.M."/>
        </authorList>
    </citation>
    <scope>GENOME REANNOTATION</scope>
    <source>
        <strain>ATCC 204508 / S288c</strain>
    </source>
</reference>
<reference key="3">
    <citation type="journal article" date="2007" name="Genome Res.">
        <title>Approaching a complete repository of sequence-verified protein-encoding clones for Saccharomyces cerevisiae.</title>
        <authorList>
            <person name="Hu Y."/>
            <person name="Rolfs A."/>
            <person name="Bhullar B."/>
            <person name="Murthy T.V.S."/>
            <person name="Zhu C."/>
            <person name="Berger M.F."/>
            <person name="Camargo A.A."/>
            <person name="Kelley F."/>
            <person name="McCarron S."/>
            <person name="Jepson D."/>
            <person name="Richardson A."/>
            <person name="Raphael J."/>
            <person name="Moreira D."/>
            <person name="Taycher E."/>
            <person name="Zuo D."/>
            <person name="Mohr S."/>
            <person name="Kane M.F."/>
            <person name="Williamson J."/>
            <person name="Simpson A.J.G."/>
            <person name="Bulyk M.L."/>
            <person name="Harlow E."/>
            <person name="Marsischky G."/>
            <person name="Kolodner R.D."/>
            <person name="LaBaer J."/>
        </authorList>
    </citation>
    <scope>NUCLEOTIDE SEQUENCE [GENOMIC DNA]</scope>
    <source>
        <strain>ATCC 204508 / S288c</strain>
    </source>
</reference>
<reference key="4">
    <citation type="journal article" date="1997" name="Yeast">
        <title>Cloning and expression of two chitin deacetylase genes of Saccharomyces cerevisiae.</title>
        <authorList>
            <person name="Mishra C."/>
            <person name="Semino C.E."/>
            <person name="McCreath K.J."/>
            <person name="de la Vega H."/>
            <person name="Jones B.J."/>
            <person name="Specht C.A."/>
            <person name="Robbins P.W."/>
        </authorList>
    </citation>
    <scope>FUNCTION</scope>
    <scope>CATALYTIC ACTIVITY</scope>
    <scope>DEVELOPMENTAL STAGE</scope>
</reference>
<comment type="function">
    <text evidence="4">Hydrolyzes the N-acetamido groups of N-acetyl-D-glucosamine residues in chitin to form chitosan and acetate (PubMed:9133736). Chitosan is a component of the spore wall (PubMed:9133736).</text>
</comment>
<comment type="catalytic activity">
    <reaction evidence="7">
        <text>[(1-&gt;4)-N-acetyl-beta-D-glucosaminyl](n) + n H2O = chitosan + n acetate</text>
        <dbReference type="Rhea" id="RHEA:10464"/>
        <dbReference type="Rhea" id="RHEA-COMP:9593"/>
        <dbReference type="Rhea" id="RHEA-COMP:9597"/>
        <dbReference type="ChEBI" id="CHEBI:15377"/>
        <dbReference type="ChEBI" id="CHEBI:17029"/>
        <dbReference type="ChEBI" id="CHEBI:30089"/>
        <dbReference type="ChEBI" id="CHEBI:57704"/>
        <dbReference type="EC" id="3.5.1.41"/>
    </reaction>
    <physiologicalReaction direction="left-to-right" evidence="7">
        <dbReference type="Rhea" id="RHEA:10465"/>
    </physiologicalReaction>
</comment>
<comment type="cofactor">
    <cofactor evidence="1">
        <name>Co(2+)</name>
        <dbReference type="ChEBI" id="CHEBI:48828"/>
    </cofactor>
</comment>
<comment type="subcellular location">
    <subcellularLocation>
        <location evidence="7">Prospore</location>
    </subcellularLocation>
</comment>
<comment type="developmental stage">
    <text evidence="4">Induced during sporulation.</text>
</comment>
<comment type="similarity">
    <text evidence="6">Belongs to the polysaccharide deacetylase family.</text>
</comment>
<organism>
    <name type="scientific">Saccharomyces cerevisiae (strain ATCC 204508 / S288c)</name>
    <name type="common">Baker's yeast</name>
    <dbReference type="NCBI Taxonomy" id="559292"/>
    <lineage>
        <taxon>Eukaryota</taxon>
        <taxon>Fungi</taxon>
        <taxon>Dikarya</taxon>
        <taxon>Ascomycota</taxon>
        <taxon>Saccharomycotina</taxon>
        <taxon>Saccharomycetes</taxon>
        <taxon>Saccharomycetales</taxon>
        <taxon>Saccharomycetaceae</taxon>
        <taxon>Saccharomyces</taxon>
    </lineage>
</organism>
<keyword id="KW-0119">Carbohydrate metabolism</keyword>
<keyword id="KW-0961">Cell wall biogenesis/degradation</keyword>
<keyword id="KW-0146">Chitin degradation</keyword>
<keyword id="KW-0147">Chitin-binding</keyword>
<keyword id="KW-0170">Cobalt</keyword>
<keyword id="KW-1015">Disulfide bond</keyword>
<keyword id="KW-0325">Glycoprotein</keyword>
<keyword id="KW-0378">Hydrolase</keyword>
<keyword id="KW-0479">Metal-binding</keyword>
<keyword id="KW-0624">Polysaccharide degradation</keyword>
<keyword id="KW-1185">Reference proteome</keyword>
<keyword id="KW-0732">Signal</keyword>
<keyword id="KW-0749">Sporulation</keyword>
<gene>
    <name evidence="5" type="primary">CDA1</name>
    <name type="ordered locus">YLR307W</name>
    <name type="ORF">L2142.2</name>
</gene>
<proteinExistence type="evidence at protein level"/>
<accession>Q06702</accession>
<accession>D6VYV0</accession>
<dbReference type="EC" id="3.5.1.41" evidence="7"/>
<dbReference type="EMBL" id="U17247">
    <property type="protein sequence ID" value="AAB67356.1"/>
    <property type="molecule type" value="Genomic_DNA"/>
</dbReference>
<dbReference type="EMBL" id="AY557948">
    <property type="protein sequence ID" value="AAS56274.1"/>
    <property type="molecule type" value="Genomic_DNA"/>
</dbReference>
<dbReference type="EMBL" id="BK006945">
    <property type="protein sequence ID" value="DAA09616.1"/>
    <property type="molecule type" value="Genomic_DNA"/>
</dbReference>
<dbReference type="PIR" id="S51439">
    <property type="entry name" value="S51439"/>
</dbReference>
<dbReference type="RefSeq" id="NP_013410.1">
    <property type="nucleotide sequence ID" value="NM_001182195.1"/>
</dbReference>
<dbReference type="SMR" id="Q06702"/>
<dbReference type="BioGRID" id="31572">
    <property type="interactions" value="34"/>
</dbReference>
<dbReference type="FunCoup" id="Q06702">
    <property type="interactions" value="73"/>
</dbReference>
<dbReference type="STRING" id="4932.YLR307W"/>
<dbReference type="GlyCosmos" id="Q06702">
    <property type="glycosylation" value="4 sites, No reported glycans"/>
</dbReference>
<dbReference type="GlyGen" id="Q06702">
    <property type="glycosylation" value="4 sites"/>
</dbReference>
<dbReference type="PaxDb" id="4932-YLR307W"/>
<dbReference type="PeptideAtlas" id="Q06702"/>
<dbReference type="EnsemblFungi" id="YLR307W_mRNA">
    <property type="protein sequence ID" value="YLR307W"/>
    <property type="gene ID" value="YLR307W"/>
</dbReference>
<dbReference type="GeneID" id="851016"/>
<dbReference type="KEGG" id="sce:YLR307W"/>
<dbReference type="AGR" id="SGD:S000004298"/>
<dbReference type="SGD" id="S000004298">
    <property type="gene designation" value="CDA1"/>
</dbReference>
<dbReference type="VEuPathDB" id="FungiDB:YLR307W"/>
<dbReference type="eggNOG" id="ENOG502QRIP">
    <property type="taxonomic scope" value="Eukaryota"/>
</dbReference>
<dbReference type="GeneTree" id="ENSGT00940000176634"/>
<dbReference type="HOGENOM" id="CLU_030200_1_0_1"/>
<dbReference type="InParanoid" id="Q06702"/>
<dbReference type="OMA" id="TGDWNNQ"/>
<dbReference type="OrthoDB" id="2125469at2759"/>
<dbReference type="BioCyc" id="MetaCyc:YLR307W-MONOMER"/>
<dbReference type="BioCyc" id="YEAST:YLR307W-MONOMER"/>
<dbReference type="BioGRID-ORCS" id="851016">
    <property type="hits" value="0 hits in 10 CRISPR screens"/>
</dbReference>
<dbReference type="PRO" id="PR:Q06702"/>
<dbReference type="Proteomes" id="UP000002311">
    <property type="component" value="Chromosome XII"/>
</dbReference>
<dbReference type="RNAct" id="Q06702">
    <property type="molecule type" value="protein"/>
</dbReference>
<dbReference type="GO" id="GO:0005628">
    <property type="term" value="C:prospore membrane"/>
    <property type="evidence" value="ECO:0007005"/>
    <property type="project" value="SGD"/>
</dbReference>
<dbReference type="GO" id="GO:0008061">
    <property type="term" value="F:chitin binding"/>
    <property type="evidence" value="ECO:0007669"/>
    <property type="project" value="UniProtKB-KW"/>
</dbReference>
<dbReference type="GO" id="GO:0004099">
    <property type="term" value="F:chitin deacetylase activity"/>
    <property type="evidence" value="ECO:0000315"/>
    <property type="project" value="SGD"/>
</dbReference>
<dbReference type="GO" id="GO:0046872">
    <property type="term" value="F:metal ion binding"/>
    <property type="evidence" value="ECO:0007669"/>
    <property type="project" value="UniProtKB-KW"/>
</dbReference>
<dbReference type="GO" id="GO:0030476">
    <property type="term" value="P:ascospore wall assembly"/>
    <property type="evidence" value="ECO:0000315"/>
    <property type="project" value="SGD"/>
</dbReference>
<dbReference type="GO" id="GO:0006032">
    <property type="term" value="P:chitin catabolic process"/>
    <property type="evidence" value="ECO:0007669"/>
    <property type="project" value="UniProtKB-KW"/>
</dbReference>
<dbReference type="GO" id="GO:0000272">
    <property type="term" value="P:polysaccharide catabolic process"/>
    <property type="evidence" value="ECO:0007669"/>
    <property type="project" value="UniProtKB-KW"/>
</dbReference>
<dbReference type="CDD" id="cd10952">
    <property type="entry name" value="CE4_MrCDA_like"/>
    <property type="match status" value="1"/>
</dbReference>
<dbReference type="FunFam" id="3.20.20.370:FF:000008">
    <property type="entry name" value="Chitin deacetylase"/>
    <property type="match status" value="1"/>
</dbReference>
<dbReference type="Gene3D" id="3.20.20.370">
    <property type="entry name" value="Glycoside hydrolase/deacetylase"/>
    <property type="match status" value="1"/>
</dbReference>
<dbReference type="InterPro" id="IPR011330">
    <property type="entry name" value="Glyco_hydro/deAcase_b/a-brl"/>
</dbReference>
<dbReference type="InterPro" id="IPR002509">
    <property type="entry name" value="NODB_dom"/>
</dbReference>
<dbReference type="InterPro" id="IPR050248">
    <property type="entry name" value="Polysacc_deacetylase_ArnD"/>
</dbReference>
<dbReference type="PANTHER" id="PTHR10587:SF133">
    <property type="entry name" value="CHITIN DEACETYLASE 1-RELATED"/>
    <property type="match status" value="1"/>
</dbReference>
<dbReference type="PANTHER" id="PTHR10587">
    <property type="entry name" value="GLYCOSYL TRANSFERASE-RELATED"/>
    <property type="match status" value="1"/>
</dbReference>
<dbReference type="Pfam" id="PF01522">
    <property type="entry name" value="Polysacc_deac_1"/>
    <property type="match status" value="1"/>
</dbReference>
<dbReference type="SUPFAM" id="SSF88713">
    <property type="entry name" value="Glycoside hydrolase/deacetylase"/>
    <property type="match status" value="1"/>
</dbReference>
<dbReference type="PROSITE" id="PS51677">
    <property type="entry name" value="NODB"/>
    <property type="match status" value="1"/>
</dbReference>